<organism>
    <name type="scientific">Mesoplasma florum (strain ATCC 33453 / NBRC 100688 / NCTC 11704 / L1)</name>
    <name type="common">Acholeplasma florum</name>
    <dbReference type="NCBI Taxonomy" id="265311"/>
    <lineage>
        <taxon>Bacteria</taxon>
        <taxon>Bacillati</taxon>
        <taxon>Mycoplasmatota</taxon>
        <taxon>Mollicutes</taxon>
        <taxon>Entomoplasmatales</taxon>
        <taxon>Entomoplasmataceae</taxon>
        <taxon>Mesoplasma</taxon>
    </lineage>
</organism>
<sequence>MPREFSLENTRNLGIMAHIDAGKTTTTERILFHTGKIHKIGETHEGASQMDWMAQEQERGITITSAATTAFWKNNRFNIIDTPGHVDFTVEVERSLRVLDGAVAVLDGQSGVEPQTETVWRQATTYRVPRIVFVNKMDKTGADFIYSVKSIGDRLGAKAAPIQLPIGAEDNFTGIIDLVEMKAYEFDGKAEEIAKEIEIPADLKDQAEILRSELVEAAVEYDEELMMKFLDGEEITIPELKQAIRKGVIGAEFFPVLAGSAFKNKGVKLLLDAVVDYLPSPLDVPSIKGVLPNGEEAERHADDNEPFSALAFKVMTDPFVGKLTFFRVYSGILTKGSYVLNSTKGDKERVGRILQMHANNRNEIEEVYAGDIAAAVGLKNTTTGDTLVDEKHEIILESMVFPEPVIQLALEPKTKADQEKMGLALSKLAEEDPTFRTYTDEETGQTIIAGMGELHLDIIVDRMRREFKVETNVGAPQVSYRETIKLPAKAEGKYVKQSGGRGSYGHVVIEFEPNVDKGFEWVDKITGGRVSKEYINAARVGLENALTNGVVAGYPMIDVKATIVDGSMHDVDSNEMAYKIAASFALKEACKKMNPVILEPIMNVEVTVPDEYYGDVMGNISSKRGLIEGSEQRGNAQTIKSKVPLTEMFGYATELRSFTQGRGNYTMIFSHYAEAPRSIAEEIIKKSGK</sequence>
<reference key="1">
    <citation type="submission" date="2004-06" db="EMBL/GenBank/DDBJ databases">
        <authorList>
            <person name="Birren B.W."/>
            <person name="Stange-Thomann N."/>
            <person name="Hafez N."/>
            <person name="DeCaprio D."/>
            <person name="Fisher S."/>
            <person name="Butler J."/>
            <person name="Elkins T."/>
            <person name="Kodira C.D."/>
            <person name="Major J."/>
            <person name="Wang S."/>
            <person name="Nicol R."/>
            <person name="Nusbaum C."/>
        </authorList>
    </citation>
    <scope>NUCLEOTIDE SEQUENCE [LARGE SCALE GENOMIC DNA]</scope>
    <source>
        <strain>ATCC 33453 / NBRC 100688 / NCTC 11704 / L1</strain>
    </source>
</reference>
<evidence type="ECO:0000255" key="1">
    <source>
        <dbReference type="HAMAP-Rule" id="MF_00054"/>
    </source>
</evidence>
<comment type="function">
    <text evidence="1">Catalyzes the GTP-dependent ribosomal translocation step during translation elongation. During this step, the ribosome changes from the pre-translocational (PRE) to the post-translocational (POST) state as the newly formed A-site-bound peptidyl-tRNA and P-site-bound deacylated tRNA move to the P and E sites, respectively. Catalyzes the coordinated movement of the two tRNA molecules, the mRNA and conformational changes in the ribosome.</text>
</comment>
<comment type="subcellular location">
    <subcellularLocation>
        <location evidence="1">Cytoplasm</location>
    </subcellularLocation>
</comment>
<comment type="similarity">
    <text evidence="1">Belongs to the TRAFAC class translation factor GTPase superfamily. Classic translation factor GTPase family. EF-G/EF-2 subfamily.</text>
</comment>
<dbReference type="EMBL" id="AE017263">
    <property type="protein sequence ID" value="AAT75979.1"/>
    <property type="molecule type" value="Genomic_DNA"/>
</dbReference>
<dbReference type="RefSeq" id="WP_011183519.1">
    <property type="nucleotide sequence ID" value="NC_006055.1"/>
</dbReference>
<dbReference type="RefSeq" id="YP_053863.1">
    <property type="nucleotide sequence ID" value="NC_006055.1"/>
</dbReference>
<dbReference type="SMR" id="Q6F0J4"/>
<dbReference type="STRING" id="265311.Mfl622"/>
<dbReference type="PaxDb" id="265311-Mfl622"/>
<dbReference type="EnsemblBacteria" id="AAT75979">
    <property type="protein sequence ID" value="AAT75979"/>
    <property type="gene ID" value="Mfl622"/>
</dbReference>
<dbReference type="GeneID" id="2897751"/>
<dbReference type="KEGG" id="mfl:Mfl622"/>
<dbReference type="PATRIC" id="fig|265311.5.peg.625"/>
<dbReference type="eggNOG" id="COG0480">
    <property type="taxonomic scope" value="Bacteria"/>
</dbReference>
<dbReference type="HOGENOM" id="CLU_002794_4_1_14"/>
<dbReference type="OrthoDB" id="9804431at2"/>
<dbReference type="Proteomes" id="UP000006647">
    <property type="component" value="Chromosome"/>
</dbReference>
<dbReference type="GO" id="GO:0005737">
    <property type="term" value="C:cytoplasm"/>
    <property type="evidence" value="ECO:0007669"/>
    <property type="project" value="UniProtKB-SubCell"/>
</dbReference>
<dbReference type="GO" id="GO:0005525">
    <property type="term" value="F:GTP binding"/>
    <property type="evidence" value="ECO:0007669"/>
    <property type="project" value="UniProtKB-UniRule"/>
</dbReference>
<dbReference type="GO" id="GO:0003924">
    <property type="term" value="F:GTPase activity"/>
    <property type="evidence" value="ECO:0007669"/>
    <property type="project" value="InterPro"/>
</dbReference>
<dbReference type="GO" id="GO:0003746">
    <property type="term" value="F:translation elongation factor activity"/>
    <property type="evidence" value="ECO:0007669"/>
    <property type="project" value="UniProtKB-UniRule"/>
</dbReference>
<dbReference type="GO" id="GO:0032790">
    <property type="term" value="P:ribosome disassembly"/>
    <property type="evidence" value="ECO:0007669"/>
    <property type="project" value="TreeGrafter"/>
</dbReference>
<dbReference type="CDD" id="cd01886">
    <property type="entry name" value="EF-G"/>
    <property type="match status" value="1"/>
</dbReference>
<dbReference type="CDD" id="cd16262">
    <property type="entry name" value="EFG_III"/>
    <property type="match status" value="1"/>
</dbReference>
<dbReference type="CDD" id="cd01434">
    <property type="entry name" value="EFG_mtEFG1_IV"/>
    <property type="match status" value="1"/>
</dbReference>
<dbReference type="CDD" id="cd03713">
    <property type="entry name" value="EFG_mtEFG_C"/>
    <property type="match status" value="1"/>
</dbReference>
<dbReference type="CDD" id="cd04088">
    <property type="entry name" value="EFG_mtEFG_II"/>
    <property type="match status" value="1"/>
</dbReference>
<dbReference type="FunFam" id="2.40.30.10:FF:000006">
    <property type="entry name" value="Elongation factor G"/>
    <property type="match status" value="1"/>
</dbReference>
<dbReference type="FunFam" id="3.30.230.10:FF:000003">
    <property type="entry name" value="Elongation factor G"/>
    <property type="match status" value="1"/>
</dbReference>
<dbReference type="FunFam" id="3.30.70.240:FF:000001">
    <property type="entry name" value="Elongation factor G"/>
    <property type="match status" value="1"/>
</dbReference>
<dbReference type="FunFam" id="3.30.70.870:FF:000001">
    <property type="entry name" value="Elongation factor G"/>
    <property type="match status" value="1"/>
</dbReference>
<dbReference type="FunFam" id="3.40.50.300:FF:000029">
    <property type="entry name" value="Elongation factor G"/>
    <property type="match status" value="1"/>
</dbReference>
<dbReference type="Gene3D" id="3.30.230.10">
    <property type="match status" value="1"/>
</dbReference>
<dbReference type="Gene3D" id="3.30.70.240">
    <property type="match status" value="1"/>
</dbReference>
<dbReference type="Gene3D" id="3.30.70.870">
    <property type="entry name" value="Elongation Factor G (Translational Gtpase), domain 3"/>
    <property type="match status" value="1"/>
</dbReference>
<dbReference type="Gene3D" id="3.40.50.300">
    <property type="entry name" value="P-loop containing nucleotide triphosphate hydrolases"/>
    <property type="match status" value="1"/>
</dbReference>
<dbReference type="Gene3D" id="2.40.30.10">
    <property type="entry name" value="Translation factors"/>
    <property type="match status" value="1"/>
</dbReference>
<dbReference type="HAMAP" id="MF_00054_B">
    <property type="entry name" value="EF_G_EF_2_B"/>
    <property type="match status" value="1"/>
</dbReference>
<dbReference type="InterPro" id="IPR053905">
    <property type="entry name" value="EF-G-like_DII"/>
</dbReference>
<dbReference type="InterPro" id="IPR041095">
    <property type="entry name" value="EFG_II"/>
</dbReference>
<dbReference type="InterPro" id="IPR009022">
    <property type="entry name" value="EFG_III"/>
</dbReference>
<dbReference type="InterPro" id="IPR035647">
    <property type="entry name" value="EFG_III/V"/>
</dbReference>
<dbReference type="InterPro" id="IPR047872">
    <property type="entry name" value="EFG_IV"/>
</dbReference>
<dbReference type="InterPro" id="IPR035649">
    <property type="entry name" value="EFG_V"/>
</dbReference>
<dbReference type="InterPro" id="IPR000640">
    <property type="entry name" value="EFG_V-like"/>
</dbReference>
<dbReference type="InterPro" id="IPR031157">
    <property type="entry name" value="G_TR_CS"/>
</dbReference>
<dbReference type="InterPro" id="IPR027417">
    <property type="entry name" value="P-loop_NTPase"/>
</dbReference>
<dbReference type="InterPro" id="IPR020568">
    <property type="entry name" value="Ribosomal_Su5_D2-typ_SF"/>
</dbReference>
<dbReference type="InterPro" id="IPR014721">
    <property type="entry name" value="Ribsml_uS5_D2-typ_fold_subgr"/>
</dbReference>
<dbReference type="InterPro" id="IPR005225">
    <property type="entry name" value="Small_GTP-bd"/>
</dbReference>
<dbReference type="InterPro" id="IPR000795">
    <property type="entry name" value="T_Tr_GTP-bd_dom"/>
</dbReference>
<dbReference type="InterPro" id="IPR009000">
    <property type="entry name" value="Transl_B-barrel_sf"/>
</dbReference>
<dbReference type="InterPro" id="IPR004540">
    <property type="entry name" value="Transl_elong_EFG/EF2"/>
</dbReference>
<dbReference type="InterPro" id="IPR005517">
    <property type="entry name" value="Transl_elong_EFG/EF2_IV"/>
</dbReference>
<dbReference type="NCBIfam" id="TIGR00484">
    <property type="entry name" value="EF-G"/>
    <property type="match status" value="1"/>
</dbReference>
<dbReference type="NCBIfam" id="NF009381">
    <property type="entry name" value="PRK12740.1-5"/>
    <property type="match status" value="1"/>
</dbReference>
<dbReference type="NCBIfam" id="TIGR00231">
    <property type="entry name" value="small_GTP"/>
    <property type="match status" value="1"/>
</dbReference>
<dbReference type="PANTHER" id="PTHR43261:SF1">
    <property type="entry name" value="RIBOSOME-RELEASING FACTOR 2, MITOCHONDRIAL"/>
    <property type="match status" value="1"/>
</dbReference>
<dbReference type="PANTHER" id="PTHR43261">
    <property type="entry name" value="TRANSLATION ELONGATION FACTOR G-RELATED"/>
    <property type="match status" value="1"/>
</dbReference>
<dbReference type="Pfam" id="PF22042">
    <property type="entry name" value="EF-G_D2"/>
    <property type="match status" value="1"/>
</dbReference>
<dbReference type="Pfam" id="PF00679">
    <property type="entry name" value="EFG_C"/>
    <property type="match status" value="1"/>
</dbReference>
<dbReference type="Pfam" id="PF14492">
    <property type="entry name" value="EFG_III"/>
    <property type="match status" value="1"/>
</dbReference>
<dbReference type="Pfam" id="PF03764">
    <property type="entry name" value="EFG_IV"/>
    <property type="match status" value="1"/>
</dbReference>
<dbReference type="Pfam" id="PF00009">
    <property type="entry name" value="GTP_EFTU"/>
    <property type="match status" value="1"/>
</dbReference>
<dbReference type="PRINTS" id="PR00315">
    <property type="entry name" value="ELONGATNFCT"/>
</dbReference>
<dbReference type="SMART" id="SM00838">
    <property type="entry name" value="EFG_C"/>
    <property type="match status" value="1"/>
</dbReference>
<dbReference type="SMART" id="SM00889">
    <property type="entry name" value="EFG_IV"/>
    <property type="match status" value="1"/>
</dbReference>
<dbReference type="SUPFAM" id="SSF54980">
    <property type="entry name" value="EF-G C-terminal domain-like"/>
    <property type="match status" value="2"/>
</dbReference>
<dbReference type="SUPFAM" id="SSF52540">
    <property type="entry name" value="P-loop containing nucleoside triphosphate hydrolases"/>
    <property type="match status" value="1"/>
</dbReference>
<dbReference type="SUPFAM" id="SSF54211">
    <property type="entry name" value="Ribosomal protein S5 domain 2-like"/>
    <property type="match status" value="1"/>
</dbReference>
<dbReference type="SUPFAM" id="SSF50447">
    <property type="entry name" value="Translation proteins"/>
    <property type="match status" value="1"/>
</dbReference>
<dbReference type="PROSITE" id="PS00301">
    <property type="entry name" value="G_TR_1"/>
    <property type="match status" value="1"/>
</dbReference>
<dbReference type="PROSITE" id="PS51722">
    <property type="entry name" value="G_TR_2"/>
    <property type="match status" value="1"/>
</dbReference>
<gene>
    <name evidence="1" type="primary">fusA</name>
    <name type="ordered locus">Mfl622</name>
</gene>
<keyword id="KW-0963">Cytoplasm</keyword>
<keyword id="KW-0251">Elongation factor</keyword>
<keyword id="KW-0342">GTP-binding</keyword>
<keyword id="KW-0547">Nucleotide-binding</keyword>
<keyword id="KW-0648">Protein biosynthesis</keyword>
<keyword id="KW-1185">Reference proteome</keyword>
<protein>
    <recommendedName>
        <fullName evidence="1">Elongation factor G</fullName>
        <shortName evidence="1">EF-G</shortName>
    </recommendedName>
</protein>
<name>EFG_MESFL</name>
<feature type="chain" id="PRO_0000091150" description="Elongation factor G">
    <location>
        <begin position="1"/>
        <end position="689"/>
    </location>
</feature>
<feature type="domain" description="tr-type G">
    <location>
        <begin position="8"/>
        <end position="282"/>
    </location>
</feature>
<feature type="binding site" evidence="1">
    <location>
        <begin position="17"/>
        <end position="24"/>
    </location>
    <ligand>
        <name>GTP</name>
        <dbReference type="ChEBI" id="CHEBI:37565"/>
    </ligand>
</feature>
<feature type="binding site" evidence="1">
    <location>
        <begin position="81"/>
        <end position="85"/>
    </location>
    <ligand>
        <name>GTP</name>
        <dbReference type="ChEBI" id="CHEBI:37565"/>
    </ligand>
</feature>
<feature type="binding site" evidence="1">
    <location>
        <begin position="135"/>
        <end position="138"/>
    </location>
    <ligand>
        <name>GTP</name>
        <dbReference type="ChEBI" id="CHEBI:37565"/>
    </ligand>
</feature>
<proteinExistence type="inferred from homology"/>
<accession>Q6F0J4</accession>